<comment type="catalytic activity">
    <reaction evidence="1">
        <text>tRNA(Gly) + glycine + ATP = glycyl-tRNA(Gly) + AMP + diphosphate</text>
        <dbReference type="Rhea" id="RHEA:16013"/>
        <dbReference type="Rhea" id="RHEA-COMP:9664"/>
        <dbReference type="Rhea" id="RHEA-COMP:9683"/>
        <dbReference type="ChEBI" id="CHEBI:30616"/>
        <dbReference type="ChEBI" id="CHEBI:33019"/>
        <dbReference type="ChEBI" id="CHEBI:57305"/>
        <dbReference type="ChEBI" id="CHEBI:78442"/>
        <dbReference type="ChEBI" id="CHEBI:78522"/>
        <dbReference type="ChEBI" id="CHEBI:456215"/>
        <dbReference type="EC" id="6.1.1.14"/>
    </reaction>
</comment>
<comment type="subunit">
    <text evidence="1">Tetramer of two alpha and two beta subunits.</text>
</comment>
<comment type="subcellular location">
    <subcellularLocation>
        <location evidence="1">Cytoplasm</location>
    </subcellularLocation>
</comment>
<comment type="similarity">
    <text evidence="1">Belongs to the class-II aminoacyl-tRNA synthetase family.</text>
</comment>
<reference key="1">
    <citation type="journal article" date="2006" name="J. Bacteriol.">
        <title>Complete genome sequence of Yersinia pestis strains Antiqua and Nepal516: evidence of gene reduction in an emerging pathogen.</title>
        <authorList>
            <person name="Chain P.S.G."/>
            <person name="Hu P."/>
            <person name="Malfatti S.A."/>
            <person name="Radnedge L."/>
            <person name="Larimer F."/>
            <person name="Vergez L.M."/>
            <person name="Worsham P."/>
            <person name="Chu M.C."/>
            <person name="Andersen G.L."/>
        </authorList>
    </citation>
    <scope>NUCLEOTIDE SEQUENCE [LARGE SCALE GENOMIC DNA]</scope>
    <source>
        <strain>Nepal516</strain>
    </source>
</reference>
<reference key="2">
    <citation type="submission" date="2009-04" db="EMBL/GenBank/DDBJ databases">
        <title>Yersinia pestis Nepal516A whole genome shotgun sequencing project.</title>
        <authorList>
            <person name="Plunkett G. III"/>
            <person name="Anderson B.D."/>
            <person name="Baumler D.J."/>
            <person name="Burland V."/>
            <person name="Cabot E.L."/>
            <person name="Glasner J.D."/>
            <person name="Mau B."/>
            <person name="Neeno-Eckwall E."/>
            <person name="Perna N.T."/>
            <person name="Munk A.C."/>
            <person name="Tapia R."/>
            <person name="Green L.D."/>
            <person name="Rogers Y.C."/>
            <person name="Detter J.C."/>
            <person name="Bruce D.C."/>
            <person name="Brettin T.S."/>
        </authorList>
    </citation>
    <scope>NUCLEOTIDE SEQUENCE [LARGE SCALE GENOMIC DNA]</scope>
    <source>
        <strain>Nepal516</strain>
    </source>
</reference>
<dbReference type="EC" id="6.1.1.14" evidence="1"/>
<dbReference type="EMBL" id="CP000305">
    <property type="protein sequence ID" value="ABG20044.1"/>
    <property type="molecule type" value="Genomic_DNA"/>
</dbReference>
<dbReference type="EMBL" id="ACNQ01000019">
    <property type="protein sequence ID" value="EEO74623.1"/>
    <property type="molecule type" value="Genomic_DNA"/>
</dbReference>
<dbReference type="RefSeq" id="WP_002209623.1">
    <property type="nucleotide sequence ID" value="NZ_ACNQ01000019.1"/>
</dbReference>
<dbReference type="SMR" id="Q1CD86"/>
<dbReference type="GeneID" id="57974645"/>
<dbReference type="KEGG" id="ypn:YPN_3717"/>
<dbReference type="HOGENOM" id="CLU_007220_2_2_6"/>
<dbReference type="Proteomes" id="UP000008936">
    <property type="component" value="Chromosome"/>
</dbReference>
<dbReference type="GO" id="GO:0005829">
    <property type="term" value="C:cytosol"/>
    <property type="evidence" value="ECO:0007669"/>
    <property type="project" value="TreeGrafter"/>
</dbReference>
<dbReference type="GO" id="GO:0004814">
    <property type="term" value="F:arginine-tRNA ligase activity"/>
    <property type="evidence" value="ECO:0007669"/>
    <property type="project" value="InterPro"/>
</dbReference>
<dbReference type="GO" id="GO:0005524">
    <property type="term" value="F:ATP binding"/>
    <property type="evidence" value="ECO:0007669"/>
    <property type="project" value="UniProtKB-UniRule"/>
</dbReference>
<dbReference type="GO" id="GO:0004820">
    <property type="term" value="F:glycine-tRNA ligase activity"/>
    <property type="evidence" value="ECO:0007669"/>
    <property type="project" value="UniProtKB-UniRule"/>
</dbReference>
<dbReference type="GO" id="GO:0006420">
    <property type="term" value="P:arginyl-tRNA aminoacylation"/>
    <property type="evidence" value="ECO:0007669"/>
    <property type="project" value="InterPro"/>
</dbReference>
<dbReference type="GO" id="GO:0006426">
    <property type="term" value="P:glycyl-tRNA aminoacylation"/>
    <property type="evidence" value="ECO:0007669"/>
    <property type="project" value="UniProtKB-UniRule"/>
</dbReference>
<dbReference type="HAMAP" id="MF_00255">
    <property type="entry name" value="Gly_tRNA_synth_beta"/>
    <property type="match status" value="1"/>
</dbReference>
<dbReference type="InterPro" id="IPR008909">
    <property type="entry name" value="DALR_anticod-bd"/>
</dbReference>
<dbReference type="InterPro" id="IPR015944">
    <property type="entry name" value="Gly-tRNA-synth_bsu"/>
</dbReference>
<dbReference type="InterPro" id="IPR006194">
    <property type="entry name" value="Gly-tRNA-synth_heterodimer"/>
</dbReference>
<dbReference type="NCBIfam" id="TIGR00211">
    <property type="entry name" value="glyS"/>
    <property type="match status" value="1"/>
</dbReference>
<dbReference type="PANTHER" id="PTHR30075:SF2">
    <property type="entry name" value="GLYCINE--TRNA LIGASE, CHLOROPLASTIC_MITOCHONDRIAL 2"/>
    <property type="match status" value="1"/>
</dbReference>
<dbReference type="PANTHER" id="PTHR30075">
    <property type="entry name" value="GLYCYL-TRNA SYNTHETASE"/>
    <property type="match status" value="1"/>
</dbReference>
<dbReference type="Pfam" id="PF05746">
    <property type="entry name" value="DALR_1"/>
    <property type="match status" value="1"/>
</dbReference>
<dbReference type="Pfam" id="PF02092">
    <property type="entry name" value="tRNA_synt_2f"/>
    <property type="match status" value="1"/>
</dbReference>
<dbReference type="PRINTS" id="PR01045">
    <property type="entry name" value="TRNASYNTHGB"/>
</dbReference>
<dbReference type="SUPFAM" id="SSF109604">
    <property type="entry name" value="HD-domain/PDEase-like"/>
    <property type="match status" value="1"/>
</dbReference>
<dbReference type="PROSITE" id="PS50861">
    <property type="entry name" value="AA_TRNA_LIGASE_II_GLYAB"/>
    <property type="match status" value="1"/>
</dbReference>
<evidence type="ECO:0000255" key="1">
    <source>
        <dbReference type="HAMAP-Rule" id="MF_00255"/>
    </source>
</evidence>
<proteinExistence type="inferred from homology"/>
<feature type="chain" id="PRO_1000006424" description="Glycine--tRNA ligase beta subunit">
    <location>
        <begin position="1"/>
        <end position="689"/>
    </location>
</feature>
<accession>Q1CD86</accession>
<accession>D1Q270</accession>
<gene>
    <name evidence="1" type="primary">glyS</name>
    <name type="ordered locus">YPN_3717</name>
    <name type="ORF">YP516_4226</name>
</gene>
<protein>
    <recommendedName>
        <fullName evidence="1">Glycine--tRNA ligase beta subunit</fullName>
        <ecNumber evidence="1">6.1.1.14</ecNumber>
    </recommendedName>
    <alternativeName>
        <fullName evidence="1">Glycyl-tRNA synthetase beta subunit</fullName>
        <shortName evidence="1">GlyRS</shortName>
    </alternativeName>
</protein>
<organism>
    <name type="scientific">Yersinia pestis bv. Antiqua (strain Nepal516)</name>
    <dbReference type="NCBI Taxonomy" id="377628"/>
    <lineage>
        <taxon>Bacteria</taxon>
        <taxon>Pseudomonadati</taxon>
        <taxon>Pseudomonadota</taxon>
        <taxon>Gammaproteobacteria</taxon>
        <taxon>Enterobacterales</taxon>
        <taxon>Yersiniaceae</taxon>
        <taxon>Yersinia</taxon>
    </lineage>
</organism>
<keyword id="KW-0030">Aminoacyl-tRNA synthetase</keyword>
<keyword id="KW-0067">ATP-binding</keyword>
<keyword id="KW-0963">Cytoplasm</keyword>
<keyword id="KW-0436">Ligase</keyword>
<keyword id="KW-0547">Nucleotide-binding</keyword>
<keyword id="KW-0648">Protein biosynthesis</keyword>
<sequence length="689" mass="76204">MTQQTFLVEIGTEELPPKALRSLAESFAANFTAELDNANLSHGEVSWYAAPRRLAVKVANLSAAQADREVEKRGPAIAQAFDAEGKPSKAAEGWARGCGITVDQAERLVTDKGEWLLYRAHVKGQPAQLLLAGMVNTALSKLPIPKLMRWGDKETQFVRPVHTVTLLLGTEVIPGTVLGINSDRVIRGHRFMGEAEFTIDSADQYPQILLERGKVIADYELRKSIIKRDAEQAAQQIGGVADLSESLLEEVASLVEWPVVLTAKFEEKFLAVPAEALVYTMKGDQKYFPVYDTAGHLMPHFIFVANIESKDPQQIISGNEKVVRPRLADAEFFFKTDRKKRLEDNLPRLETVLFQQQLGTLRDKTDRIQALAGWVAAQIGADVNHATRAGLLSKCDLMTNMVFEFTDTQGVMGMHYARHDGEAEDVAVALNEQYQPRFAGDDLPSNPVACALAIADKMDTLAGIFGIGQHPKGDKDPFALRRAALGVLRIIVEKNLSLDLQTLTEEAVRLYGSKLTNAKVVDDVIEFMLGRFRAWYQDEGHSVDTIQAVLARRPTKPADFDARVKAVTYFRTLDAAAALAAANKRVSNILAKSTDTLNDHVHASILKEPAELKLATHLVVLRDQLEPVFAAGQYKEALVELAALRETVDEFFESVMVMAEDDAVRVNRLTLLSKLRELFLQVADISLLQ</sequence>
<name>SYGB_YERPN</name>